<proteinExistence type="inferred from homology"/>
<evidence type="ECO:0000255" key="1">
    <source>
        <dbReference type="HAMAP-Rule" id="MF_00083"/>
    </source>
</evidence>
<protein>
    <recommendedName>
        <fullName evidence="1">Peptidyl-tRNA hydrolase</fullName>
        <shortName evidence="1">Pth</shortName>
        <ecNumber evidence="1">3.1.1.29</ecNumber>
    </recommendedName>
</protein>
<comment type="function">
    <text evidence="1">Hydrolyzes ribosome-free peptidyl-tRNAs (with 1 or more amino acids incorporated), which drop off the ribosome during protein synthesis, or as a result of ribosome stalling.</text>
</comment>
<comment type="function">
    <text evidence="1">Catalyzes the release of premature peptidyl moieties from peptidyl-tRNA molecules trapped in stalled 50S ribosomal subunits, and thus maintains levels of free tRNAs and 50S ribosomes.</text>
</comment>
<comment type="catalytic activity">
    <reaction evidence="1">
        <text>an N-acyl-L-alpha-aminoacyl-tRNA + H2O = an N-acyl-L-amino acid + a tRNA + H(+)</text>
        <dbReference type="Rhea" id="RHEA:54448"/>
        <dbReference type="Rhea" id="RHEA-COMP:10123"/>
        <dbReference type="Rhea" id="RHEA-COMP:13883"/>
        <dbReference type="ChEBI" id="CHEBI:15377"/>
        <dbReference type="ChEBI" id="CHEBI:15378"/>
        <dbReference type="ChEBI" id="CHEBI:59874"/>
        <dbReference type="ChEBI" id="CHEBI:78442"/>
        <dbReference type="ChEBI" id="CHEBI:138191"/>
        <dbReference type="EC" id="3.1.1.29"/>
    </reaction>
</comment>
<comment type="subunit">
    <text evidence="1">Monomer.</text>
</comment>
<comment type="subcellular location">
    <subcellularLocation>
        <location evidence="1">Cytoplasm</location>
    </subcellularLocation>
</comment>
<comment type="similarity">
    <text evidence="1">Belongs to the PTH family.</text>
</comment>
<reference key="1">
    <citation type="submission" date="2005-08" db="EMBL/GenBank/DDBJ databases">
        <title>Complete sequence of Synechococcus sp. CC9902.</title>
        <authorList>
            <person name="Copeland A."/>
            <person name="Lucas S."/>
            <person name="Lapidus A."/>
            <person name="Barry K."/>
            <person name="Detter J.C."/>
            <person name="Glavina T."/>
            <person name="Hammon N."/>
            <person name="Israni S."/>
            <person name="Pitluck S."/>
            <person name="Martinez M."/>
            <person name="Schmutz J."/>
            <person name="Larimer F."/>
            <person name="Land M."/>
            <person name="Kyrpides N."/>
            <person name="Ivanova N."/>
            <person name="Richardson P."/>
        </authorList>
    </citation>
    <scope>NUCLEOTIDE SEQUENCE [LARGE SCALE GENOMIC DNA]</scope>
    <source>
        <strain>CC9902</strain>
    </source>
</reference>
<sequence>MMPHQLSLVVGLGNPGSKYDGTRHNIGFMALERLARREGFSFRQQAKLHGLSADKGFGDQRLRLLMPQTFMNDSGRSVRAALDWYGFQPEEIVLLVDDMDLPLGRLRLRAQGSAGGHNGLRSTIQHLGTQVFPRLRIGIGAPAENPAERRARTVSHVLGPFSRAEQPCVDAVLDAVLDGLDRLKTQGMERAGTWINGFRYESPSAT</sequence>
<name>PTH_SYNS9</name>
<dbReference type="EC" id="3.1.1.29" evidence="1"/>
<dbReference type="EMBL" id="CP000097">
    <property type="protein sequence ID" value="ABB27037.1"/>
    <property type="molecule type" value="Genomic_DNA"/>
</dbReference>
<dbReference type="SMR" id="Q3AUQ0"/>
<dbReference type="STRING" id="316279.Syncc9902_2079"/>
<dbReference type="KEGG" id="sye:Syncc9902_2079"/>
<dbReference type="eggNOG" id="COG0193">
    <property type="taxonomic scope" value="Bacteria"/>
</dbReference>
<dbReference type="HOGENOM" id="CLU_062456_4_1_3"/>
<dbReference type="Proteomes" id="UP000002712">
    <property type="component" value="Chromosome"/>
</dbReference>
<dbReference type="GO" id="GO:0005737">
    <property type="term" value="C:cytoplasm"/>
    <property type="evidence" value="ECO:0007669"/>
    <property type="project" value="UniProtKB-SubCell"/>
</dbReference>
<dbReference type="GO" id="GO:0004045">
    <property type="term" value="F:peptidyl-tRNA hydrolase activity"/>
    <property type="evidence" value="ECO:0007669"/>
    <property type="project" value="UniProtKB-UniRule"/>
</dbReference>
<dbReference type="GO" id="GO:0000049">
    <property type="term" value="F:tRNA binding"/>
    <property type="evidence" value="ECO:0007669"/>
    <property type="project" value="UniProtKB-UniRule"/>
</dbReference>
<dbReference type="GO" id="GO:0006515">
    <property type="term" value="P:protein quality control for misfolded or incompletely synthesized proteins"/>
    <property type="evidence" value="ECO:0007669"/>
    <property type="project" value="UniProtKB-UniRule"/>
</dbReference>
<dbReference type="GO" id="GO:0072344">
    <property type="term" value="P:rescue of stalled ribosome"/>
    <property type="evidence" value="ECO:0007669"/>
    <property type="project" value="UniProtKB-UniRule"/>
</dbReference>
<dbReference type="CDD" id="cd00462">
    <property type="entry name" value="PTH"/>
    <property type="match status" value="1"/>
</dbReference>
<dbReference type="FunFam" id="3.40.50.1470:FF:000001">
    <property type="entry name" value="Peptidyl-tRNA hydrolase"/>
    <property type="match status" value="1"/>
</dbReference>
<dbReference type="Gene3D" id="3.40.50.1470">
    <property type="entry name" value="Peptidyl-tRNA hydrolase"/>
    <property type="match status" value="1"/>
</dbReference>
<dbReference type="HAMAP" id="MF_00083">
    <property type="entry name" value="Pept_tRNA_hydro_bact"/>
    <property type="match status" value="1"/>
</dbReference>
<dbReference type="InterPro" id="IPR001328">
    <property type="entry name" value="Pept_tRNA_hydro"/>
</dbReference>
<dbReference type="InterPro" id="IPR018171">
    <property type="entry name" value="Pept_tRNA_hydro_CS"/>
</dbReference>
<dbReference type="InterPro" id="IPR036416">
    <property type="entry name" value="Pept_tRNA_hydro_sf"/>
</dbReference>
<dbReference type="NCBIfam" id="TIGR00447">
    <property type="entry name" value="pth"/>
    <property type="match status" value="1"/>
</dbReference>
<dbReference type="PANTHER" id="PTHR17224">
    <property type="entry name" value="PEPTIDYL-TRNA HYDROLASE"/>
    <property type="match status" value="1"/>
</dbReference>
<dbReference type="PANTHER" id="PTHR17224:SF1">
    <property type="entry name" value="PEPTIDYL-TRNA HYDROLASE"/>
    <property type="match status" value="1"/>
</dbReference>
<dbReference type="Pfam" id="PF01195">
    <property type="entry name" value="Pept_tRNA_hydro"/>
    <property type="match status" value="1"/>
</dbReference>
<dbReference type="SUPFAM" id="SSF53178">
    <property type="entry name" value="Peptidyl-tRNA hydrolase-like"/>
    <property type="match status" value="1"/>
</dbReference>
<dbReference type="PROSITE" id="PS01195">
    <property type="entry name" value="PEPT_TRNA_HYDROL_1"/>
    <property type="match status" value="1"/>
</dbReference>
<dbReference type="PROSITE" id="PS01196">
    <property type="entry name" value="PEPT_TRNA_HYDROL_2"/>
    <property type="match status" value="1"/>
</dbReference>
<gene>
    <name evidence="1" type="primary">pth</name>
    <name type="ordered locus">Syncc9902_2079</name>
</gene>
<accession>Q3AUQ0</accession>
<feature type="chain" id="PRO_0000264125" description="Peptidyl-tRNA hydrolase">
    <location>
        <begin position="1"/>
        <end position="206"/>
    </location>
</feature>
<feature type="active site" description="Proton acceptor" evidence="1">
    <location>
        <position position="24"/>
    </location>
</feature>
<feature type="binding site" evidence="1">
    <location>
        <position position="19"/>
    </location>
    <ligand>
        <name>tRNA</name>
        <dbReference type="ChEBI" id="CHEBI:17843"/>
    </ligand>
</feature>
<feature type="binding site" evidence="1">
    <location>
        <position position="70"/>
    </location>
    <ligand>
        <name>tRNA</name>
        <dbReference type="ChEBI" id="CHEBI:17843"/>
    </ligand>
</feature>
<feature type="binding site" evidence="1">
    <location>
        <position position="72"/>
    </location>
    <ligand>
        <name>tRNA</name>
        <dbReference type="ChEBI" id="CHEBI:17843"/>
    </ligand>
</feature>
<feature type="binding site" evidence="1">
    <location>
        <position position="118"/>
    </location>
    <ligand>
        <name>tRNA</name>
        <dbReference type="ChEBI" id="CHEBI:17843"/>
    </ligand>
</feature>
<feature type="site" description="Discriminates between blocked and unblocked aminoacyl-tRNA" evidence="1">
    <location>
        <position position="14"/>
    </location>
</feature>
<feature type="site" description="Stabilizes the basic form of H active site to accept a proton" evidence="1">
    <location>
        <position position="97"/>
    </location>
</feature>
<organism>
    <name type="scientific">Synechococcus sp. (strain CC9902)</name>
    <dbReference type="NCBI Taxonomy" id="316279"/>
    <lineage>
        <taxon>Bacteria</taxon>
        <taxon>Bacillati</taxon>
        <taxon>Cyanobacteriota</taxon>
        <taxon>Cyanophyceae</taxon>
        <taxon>Synechococcales</taxon>
        <taxon>Synechococcaceae</taxon>
        <taxon>Synechococcus</taxon>
    </lineage>
</organism>
<keyword id="KW-0963">Cytoplasm</keyword>
<keyword id="KW-0378">Hydrolase</keyword>
<keyword id="KW-1185">Reference proteome</keyword>
<keyword id="KW-0694">RNA-binding</keyword>
<keyword id="KW-0820">tRNA-binding</keyword>